<name>RS10_MARMM</name>
<keyword id="KW-1185">Reference proteome</keyword>
<keyword id="KW-0687">Ribonucleoprotein</keyword>
<keyword id="KW-0689">Ribosomal protein</keyword>
<sequence length="104" mass="11880">MERQNIRIRLKAFDHRVLDNSTREIVSTAKRTGANVRGPIPLPTRIEKFTVLRSPHIDKKSREQFEIRTHKRLLDIVDPTPQTVDALMKLDLSAGVDVEIKLGA</sequence>
<accession>Q0ANP9</accession>
<reference key="1">
    <citation type="submission" date="2006-08" db="EMBL/GenBank/DDBJ databases">
        <title>Complete sequence of Maricaulis maris MCS10.</title>
        <authorList>
            <consortium name="US DOE Joint Genome Institute"/>
            <person name="Copeland A."/>
            <person name="Lucas S."/>
            <person name="Lapidus A."/>
            <person name="Barry K."/>
            <person name="Detter J.C."/>
            <person name="Glavina del Rio T."/>
            <person name="Hammon N."/>
            <person name="Israni S."/>
            <person name="Dalin E."/>
            <person name="Tice H."/>
            <person name="Pitluck S."/>
            <person name="Saunders E."/>
            <person name="Brettin T."/>
            <person name="Bruce D."/>
            <person name="Han C."/>
            <person name="Tapia R."/>
            <person name="Gilna P."/>
            <person name="Schmutz J."/>
            <person name="Larimer F."/>
            <person name="Land M."/>
            <person name="Hauser L."/>
            <person name="Kyrpides N."/>
            <person name="Mikhailova N."/>
            <person name="Viollier P."/>
            <person name="Stephens C."/>
            <person name="Richardson P."/>
        </authorList>
    </citation>
    <scope>NUCLEOTIDE SEQUENCE [LARGE SCALE GENOMIC DNA]</scope>
    <source>
        <strain>MCS10</strain>
    </source>
</reference>
<gene>
    <name evidence="1" type="primary">rpsJ</name>
    <name type="ordered locus">Mmar10_1796</name>
</gene>
<evidence type="ECO:0000255" key="1">
    <source>
        <dbReference type="HAMAP-Rule" id="MF_00508"/>
    </source>
</evidence>
<evidence type="ECO:0000305" key="2"/>
<protein>
    <recommendedName>
        <fullName evidence="1">Small ribosomal subunit protein uS10</fullName>
    </recommendedName>
    <alternativeName>
        <fullName evidence="2">30S ribosomal protein S10</fullName>
    </alternativeName>
</protein>
<dbReference type="EMBL" id="CP000449">
    <property type="protein sequence ID" value="ABI66088.1"/>
    <property type="molecule type" value="Genomic_DNA"/>
</dbReference>
<dbReference type="RefSeq" id="WP_011643734.1">
    <property type="nucleotide sequence ID" value="NC_008347.1"/>
</dbReference>
<dbReference type="SMR" id="Q0ANP9"/>
<dbReference type="STRING" id="394221.Mmar10_1796"/>
<dbReference type="KEGG" id="mmr:Mmar10_1796"/>
<dbReference type="eggNOG" id="COG0051">
    <property type="taxonomic scope" value="Bacteria"/>
</dbReference>
<dbReference type="HOGENOM" id="CLU_122625_1_3_5"/>
<dbReference type="OrthoDB" id="9804464at2"/>
<dbReference type="Proteomes" id="UP000001964">
    <property type="component" value="Chromosome"/>
</dbReference>
<dbReference type="GO" id="GO:1990904">
    <property type="term" value="C:ribonucleoprotein complex"/>
    <property type="evidence" value="ECO:0007669"/>
    <property type="project" value="UniProtKB-KW"/>
</dbReference>
<dbReference type="GO" id="GO:0005840">
    <property type="term" value="C:ribosome"/>
    <property type="evidence" value="ECO:0007669"/>
    <property type="project" value="UniProtKB-KW"/>
</dbReference>
<dbReference type="GO" id="GO:0003735">
    <property type="term" value="F:structural constituent of ribosome"/>
    <property type="evidence" value="ECO:0007669"/>
    <property type="project" value="InterPro"/>
</dbReference>
<dbReference type="GO" id="GO:0000049">
    <property type="term" value="F:tRNA binding"/>
    <property type="evidence" value="ECO:0007669"/>
    <property type="project" value="UniProtKB-UniRule"/>
</dbReference>
<dbReference type="GO" id="GO:0006412">
    <property type="term" value="P:translation"/>
    <property type="evidence" value="ECO:0007669"/>
    <property type="project" value="UniProtKB-UniRule"/>
</dbReference>
<dbReference type="FunFam" id="3.30.70.600:FF:000001">
    <property type="entry name" value="30S ribosomal protein S10"/>
    <property type="match status" value="1"/>
</dbReference>
<dbReference type="Gene3D" id="3.30.70.600">
    <property type="entry name" value="Ribosomal protein S10 domain"/>
    <property type="match status" value="1"/>
</dbReference>
<dbReference type="HAMAP" id="MF_00508">
    <property type="entry name" value="Ribosomal_uS10"/>
    <property type="match status" value="1"/>
</dbReference>
<dbReference type="InterPro" id="IPR001848">
    <property type="entry name" value="Ribosomal_uS10"/>
</dbReference>
<dbReference type="InterPro" id="IPR018268">
    <property type="entry name" value="Ribosomal_uS10_CS"/>
</dbReference>
<dbReference type="InterPro" id="IPR027486">
    <property type="entry name" value="Ribosomal_uS10_dom"/>
</dbReference>
<dbReference type="InterPro" id="IPR036838">
    <property type="entry name" value="Ribosomal_uS10_dom_sf"/>
</dbReference>
<dbReference type="NCBIfam" id="NF001861">
    <property type="entry name" value="PRK00596.1"/>
    <property type="match status" value="1"/>
</dbReference>
<dbReference type="NCBIfam" id="TIGR01049">
    <property type="entry name" value="rpsJ_bact"/>
    <property type="match status" value="1"/>
</dbReference>
<dbReference type="PANTHER" id="PTHR11700">
    <property type="entry name" value="30S RIBOSOMAL PROTEIN S10 FAMILY MEMBER"/>
    <property type="match status" value="1"/>
</dbReference>
<dbReference type="Pfam" id="PF00338">
    <property type="entry name" value="Ribosomal_S10"/>
    <property type="match status" value="1"/>
</dbReference>
<dbReference type="PRINTS" id="PR00971">
    <property type="entry name" value="RIBOSOMALS10"/>
</dbReference>
<dbReference type="SMART" id="SM01403">
    <property type="entry name" value="Ribosomal_S10"/>
    <property type="match status" value="1"/>
</dbReference>
<dbReference type="SUPFAM" id="SSF54999">
    <property type="entry name" value="Ribosomal protein S10"/>
    <property type="match status" value="1"/>
</dbReference>
<dbReference type="PROSITE" id="PS00361">
    <property type="entry name" value="RIBOSOMAL_S10"/>
    <property type="match status" value="1"/>
</dbReference>
<organism>
    <name type="scientific">Maricaulis maris (strain MCS10)</name>
    <name type="common">Caulobacter maris</name>
    <dbReference type="NCBI Taxonomy" id="394221"/>
    <lineage>
        <taxon>Bacteria</taxon>
        <taxon>Pseudomonadati</taxon>
        <taxon>Pseudomonadota</taxon>
        <taxon>Alphaproteobacteria</taxon>
        <taxon>Maricaulales</taxon>
        <taxon>Maricaulaceae</taxon>
        <taxon>Maricaulis</taxon>
    </lineage>
</organism>
<proteinExistence type="inferred from homology"/>
<comment type="function">
    <text evidence="1">Involved in the binding of tRNA to the ribosomes.</text>
</comment>
<comment type="subunit">
    <text evidence="1">Part of the 30S ribosomal subunit.</text>
</comment>
<comment type="similarity">
    <text evidence="1">Belongs to the universal ribosomal protein uS10 family.</text>
</comment>
<feature type="chain" id="PRO_1000015049" description="Small ribosomal subunit protein uS10">
    <location>
        <begin position="1"/>
        <end position="104"/>
    </location>
</feature>